<dbReference type="EC" id="2.5.1.55" evidence="1"/>
<dbReference type="EMBL" id="CP001096">
    <property type="protein sequence ID" value="ACF01725.1"/>
    <property type="molecule type" value="Genomic_DNA"/>
</dbReference>
<dbReference type="RefSeq" id="WP_012496324.1">
    <property type="nucleotide sequence ID" value="NC_011004.1"/>
</dbReference>
<dbReference type="SMR" id="B3Q6L6"/>
<dbReference type="KEGG" id="rpt:Rpal_3223"/>
<dbReference type="HOGENOM" id="CLU_036666_0_0_5"/>
<dbReference type="OrthoDB" id="9776934at2"/>
<dbReference type="UniPathway" id="UPA00030"/>
<dbReference type="UniPathway" id="UPA00357">
    <property type="reaction ID" value="UER00474"/>
</dbReference>
<dbReference type="Proteomes" id="UP000001725">
    <property type="component" value="Chromosome"/>
</dbReference>
<dbReference type="GO" id="GO:0005737">
    <property type="term" value="C:cytoplasm"/>
    <property type="evidence" value="ECO:0007669"/>
    <property type="project" value="UniProtKB-SubCell"/>
</dbReference>
<dbReference type="GO" id="GO:0008676">
    <property type="term" value="F:3-deoxy-8-phosphooctulonate synthase activity"/>
    <property type="evidence" value="ECO:0007669"/>
    <property type="project" value="UniProtKB-UniRule"/>
</dbReference>
<dbReference type="GO" id="GO:0019294">
    <property type="term" value="P:keto-3-deoxy-D-manno-octulosonic acid biosynthetic process"/>
    <property type="evidence" value="ECO:0007669"/>
    <property type="project" value="UniProtKB-UniRule"/>
</dbReference>
<dbReference type="Gene3D" id="3.20.20.70">
    <property type="entry name" value="Aldolase class I"/>
    <property type="match status" value="1"/>
</dbReference>
<dbReference type="HAMAP" id="MF_00056">
    <property type="entry name" value="KDO8P_synth"/>
    <property type="match status" value="1"/>
</dbReference>
<dbReference type="InterPro" id="IPR013785">
    <property type="entry name" value="Aldolase_TIM"/>
</dbReference>
<dbReference type="InterPro" id="IPR006218">
    <property type="entry name" value="DAHP1/KDSA"/>
</dbReference>
<dbReference type="InterPro" id="IPR006269">
    <property type="entry name" value="KDO8P_synthase"/>
</dbReference>
<dbReference type="NCBIfam" id="TIGR01362">
    <property type="entry name" value="KDO8P_synth"/>
    <property type="match status" value="1"/>
</dbReference>
<dbReference type="NCBIfam" id="NF003543">
    <property type="entry name" value="PRK05198.1"/>
    <property type="match status" value="1"/>
</dbReference>
<dbReference type="PANTHER" id="PTHR21057">
    <property type="entry name" value="PHOSPHO-2-DEHYDRO-3-DEOXYHEPTONATE ALDOLASE"/>
    <property type="match status" value="1"/>
</dbReference>
<dbReference type="Pfam" id="PF00793">
    <property type="entry name" value="DAHP_synth_1"/>
    <property type="match status" value="1"/>
</dbReference>
<dbReference type="SUPFAM" id="SSF51569">
    <property type="entry name" value="Aldolase"/>
    <property type="match status" value="1"/>
</dbReference>
<sequence length="287" mass="30052">MNKSIAPATSVVAGNVKFGNALPLSVIAGPCQLESRAHALEVASALKEIATRLGIGLVYKTSFDKANRTSAASARGLGLDAALPIFAEIRDHLGLPVLTDVHENEQCARAAEAVDILQIPAFLCRQTDLLLAAAATGRIVNVKKGQFLAPWDMGNVVSKITHAGNAKVLVTERGVSFGYNTLVSDMRALPIMAKTTGAPVIFDATHSVQQPGGKGTSSGGEREYVPVLARAAVAVGVAGVFIETHPDPDHAPSDGPNMVPLREFEALIKTLMEFDALAKKRSTVGAV</sequence>
<name>KDSA_RHOPT</name>
<protein>
    <recommendedName>
        <fullName evidence="1">2-dehydro-3-deoxyphosphooctonate aldolase</fullName>
        <ecNumber evidence="1">2.5.1.55</ecNumber>
    </recommendedName>
    <alternativeName>
        <fullName evidence="1">3-deoxy-D-manno-octulosonic acid 8-phosphate synthase</fullName>
    </alternativeName>
    <alternativeName>
        <fullName evidence="1">KDO-8-phosphate synthase</fullName>
        <shortName evidence="1">KDO 8-P synthase</shortName>
        <shortName evidence="1">KDOPS</shortName>
    </alternativeName>
    <alternativeName>
        <fullName evidence="1">Phospho-2-dehydro-3-deoxyoctonate aldolase</fullName>
    </alternativeName>
</protein>
<feature type="chain" id="PRO_1000091828" description="2-dehydro-3-deoxyphosphooctonate aldolase">
    <location>
        <begin position="1"/>
        <end position="287"/>
    </location>
</feature>
<gene>
    <name evidence="1" type="primary">kdsA</name>
    <name type="ordered locus">Rpal_3223</name>
</gene>
<proteinExistence type="inferred from homology"/>
<accession>B3Q6L6</accession>
<reference key="1">
    <citation type="submission" date="2008-05" db="EMBL/GenBank/DDBJ databases">
        <title>Complete sequence of Rhodopseudomonas palustris TIE-1.</title>
        <authorList>
            <consortium name="US DOE Joint Genome Institute"/>
            <person name="Lucas S."/>
            <person name="Copeland A."/>
            <person name="Lapidus A."/>
            <person name="Glavina del Rio T."/>
            <person name="Dalin E."/>
            <person name="Tice H."/>
            <person name="Pitluck S."/>
            <person name="Chain P."/>
            <person name="Malfatti S."/>
            <person name="Shin M."/>
            <person name="Vergez L."/>
            <person name="Lang D."/>
            <person name="Schmutz J."/>
            <person name="Larimer F."/>
            <person name="Land M."/>
            <person name="Hauser L."/>
            <person name="Kyrpides N."/>
            <person name="Mikhailova N."/>
            <person name="Emerson D."/>
            <person name="Newman D.K."/>
            <person name="Roden E."/>
            <person name="Richardson P."/>
        </authorList>
    </citation>
    <scope>NUCLEOTIDE SEQUENCE [LARGE SCALE GENOMIC DNA]</scope>
    <source>
        <strain>TIE-1</strain>
    </source>
</reference>
<comment type="catalytic activity">
    <reaction evidence="1">
        <text>D-arabinose 5-phosphate + phosphoenolpyruvate + H2O = 3-deoxy-alpha-D-manno-2-octulosonate-8-phosphate + phosphate</text>
        <dbReference type="Rhea" id="RHEA:14053"/>
        <dbReference type="ChEBI" id="CHEBI:15377"/>
        <dbReference type="ChEBI" id="CHEBI:43474"/>
        <dbReference type="ChEBI" id="CHEBI:57693"/>
        <dbReference type="ChEBI" id="CHEBI:58702"/>
        <dbReference type="ChEBI" id="CHEBI:85985"/>
        <dbReference type="EC" id="2.5.1.55"/>
    </reaction>
</comment>
<comment type="pathway">
    <text evidence="1">Carbohydrate biosynthesis; 3-deoxy-D-manno-octulosonate biosynthesis; 3-deoxy-D-manno-octulosonate from D-ribulose 5-phosphate: step 2/3.</text>
</comment>
<comment type="pathway">
    <text evidence="1">Bacterial outer membrane biogenesis; lipopolysaccharide biosynthesis.</text>
</comment>
<comment type="subcellular location">
    <subcellularLocation>
        <location evidence="1">Cytoplasm</location>
    </subcellularLocation>
</comment>
<comment type="similarity">
    <text evidence="1">Belongs to the KdsA family.</text>
</comment>
<keyword id="KW-0963">Cytoplasm</keyword>
<keyword id="KW-0448">Lipopolysaccharide biosynthesis</keyword>
<keyword id="KW-0808">Transferase</keyword>
<evidence type="ECO:0000255" key="1">
    <source>
        <dbReference type="HAMAP-Rule" id="MF_00056"/>
    </source>
</evidence>
<organism>
    <name type="scientific">Rhodopseudomonas palustris (strain TIE-1)</name>
    <dbReference type="NCBI Taxonomy" id="395960"/>
    <lineage>
        <taxon>Bacteria</taxon>
        <taxon>Pseudomonadati</taxon>
        <taxon>Pseudomonadota</taxon>
        <taxon>Alphaproteobacteria</taxon>
        <taxon>Hyphomicrobiales</taxon>
        <taxon>Nitrobacteraceae</taxon>
        <taxon>Rhodopseudomonas</taxon>
    </lineage>
</organism>